<proteinExistence type="evidence at protein level"/>
<name>IFR_CICAR</name>
<protein>
    <recommendedName>
        <fullName>Isoflavone reductase</fullName>
        <shortName>IFR</shortName>
        <ecNumber>1.3.1.45</ecNumber>
    </recommendedName>
    <alternativeName>
        <fullName>2'-hydroxyisoflavone reductase</fullName>
    </alternativeName>
    <alternativeName>
        <fullName>NADPH:isoflavone oxidoreductase</fullName>
    </alternativeName>
</protein>
<sequence length="318" mass="35408">MASQNRILVLGPTGAIGRHVVWASIKAGNPTYALIRKTPGDINKPSLVAAANPESKEELLQSFKAAGVILLEGDMNDHEALVKAIKQVDTVICTFGRLLILDQVKIIKAIKEAGNVKRFFPSEFGLDVDRHDAVDPVRPVFDEKASIRRVVEAEGVPYTYLCCHAFTGYFLRNLAQFDATEPPRDKVIILGDGNVKGAYVTEADVGTYTIRAANDPRTLNKAVHIRLPHNYLTSNEVVSLWEKKIGKTLEKSYISEEKVLKDINVSTFPHNYLLALYHSQQIKGDAVYEIDPAKDAEAYDLYPDVKYTTADEYLDQFV</sequence>
<dbReference type="EC" id="1.3.1.45"/>
<dbReference type="EMBL" id="X60755">
    <property type="protein sequence ID" value="CAA43167.1"/>
    <property type="molecule type" value="mRNA"/>
</dbReference>
<dbReference type="PIR" id="S17830">
    <property type="entry name" value="S17830"/>
</dbReference>
<dbReference type="RefSeq" id="NP_001266030.1">
    <property type="nucleotide sequence ID" value="NM_001279101.1"/>
</dbReference>
<dbReference type="SMR" id="Q00016"/>
<dbReference type="STRING" id="3827.Q00016"/>
<dbReference type="PaxDb" id="3827-XP_004512065.1"/>
<dbReference type="GeneID" id="101508729"/>
<dbReference type="KEGG" id="cam:101508729"/>
<dbReference type="eggNOG" id="ENOG502QPMY">
    <property type="taxonomic scope" value="Eukaryota"/>
</dbReference>
<dbReference type="OrthoDB" id="419598at2759"/>
<dbReference type="UniPathway" id="UPA00901"/>
<dbReference type="Proteomes" id="UP000087171">
    <property type="component" value="Chromosome Ca8"/>
</dbReference>
<dbReference type="GO" id="GO:0047526">
    <property type="term" value="F:2'-hydroxyisoflavone reductase activity"/>
    <property type="evidence" value="ECO:0007669"/>
    <property type="project" value="UniProtKB-EC"/>
</dbReference>
<dbReference type="GO" id="GO:0009807">
    <property type="term" value="P:lignan biosynthetic process"/>
    <property type="evidence" value="ECO:0007669"/>
    <property type="project" value="UniProtKB-ARBA"/>
</dbReference>
<dbReference type="CDD" id="cd05259">
    <property type="entry name" value="PCBER_SDR_a"/>
    <property type="match status" value="1"/>
</dbReference>
<dbReference type="Gene3D" id="3.40.50.720">
    <property type="entry name" value="NAD(P)-binding Rossmann-like Domain"/>
    <property type="match status" value="1"/>
</dbReference>
<dbReference type="Gene3D" id="3.90.25.10">
    <property type="entry name" value="UDP-galactose 4-epimerase, domain 1"/>
    <property type="match status" value="1"/>
</dbReference>
<dbReference type="InterPro" id="IPR036291">
    <property type="entry name" value="NAD(P)-bd_dom_sf"/>
</dbReference>
<dbReference type="InterPro" id="IPR008030">
    <property type="entry name" value="NmrA-like"/>
</dbReference>
<dbReference type="InterPro" id="IPR050608">
    <property type="entry name" value="NmrA-type/Isoflavone_red_sf"/>
</dbReference>
<dbReference type="InterPro" id="IPR045312">
    <property type="entry name" value="PCBER-like"/>
</dbReference>
<dbReference type="PANTHER" id="PTHR43349:SF53">
    <property type="entry name" value="ISOFLAVONE REDUCTASE"/>
    <property type="match status" value="1"/>
</dbReference>
<dbReference type="PANTHER" id="PTHR43349">
    <property type="entry name" value="PINORESINOL REDUCTASE-RELATED"/>
    <property type="match status" value="1"/>
</dbReference>
<dbReference type="Pfam" id="PF05368">
    <property type="entry name" value="NmrA"/>
    <property type="match status" value="1"/>
</dbReference>
<dbReference type="SUPFAM" id="SSF51735">
    <property type="entry name" value="NAD(P)-binding Rossmann-fold domains"/>
    <property type="match status" value="1"/>
</dbReference>
<evidence type="ECO:0000250" key="1">
    <source>
        <dbReference type="UniProtKB" id="Q9LD14"/>
    </source>
</evidence>
<evidence type="ECO:0000305" key="2"/>
<organism>
    <name type="scientific">Cicer arietinum</name>
    <name type="common">Chickpea</name>
    <name type="synonym">Garbanzo</name>
    <dbReference type="NCBI Taxonomy" id="3827"/>
    <lineage>
        <taxon>Eukaryota</taxon>
        <taxon>Viridiplantae</taxon>
        <taxon>Streptophyta</taxon>
        <taxon>Embryophyta</taxon>
        <taxon>Tracheophyta</taxon>
        <taxon>Spermatophyta</taxon>
        <taxon>Magnoliopsida</taxon>
        <taxon>eudicotyledons</taxon>
        <taxon>Gunneridae</taxon>
        <taxon>Pentapetalae</taxon>
        <taxon>rosids</taxon>
        <taxon>fabids</taxon>
        <taxon>Fabales</taxon>
        <taxon>Fabaceae</taxon>
        <taxon>Papilionoideae</taxon>
        <taxon>50 kb inversion clade</taxon>
        <taxon>NPAAA clade</taxon>
        <taxon>Hologalegina</taxon>
        <taxon>IRL clade</taxon>
        <taxon>Cicereae</taxon>
        <taxon>Cicer</taxon>
    </lineage>
</organism>
<comment type="function">
    <text>Reduces achiral isoflavones to chiral isoflavanones during the biosynthesis of chiral pterocarpan phytoalexins.</text>
</comment>
<comment type="catalytic activity">
    <reaction>
        <text>(3R)-vestitone + NADP(+) = 2'-hydroxyformononetin + NADPH + 2 H(+)</text>
        <dbReference type="Rhea" id="RHEA:22560"/>
        <dbReference type="ChEBI" id="CHEBI:15378"/>
        <dbReference type="ChEBI" id="CHEBI:16786"/>
        <dbReference type="ChEBI" id="CHEBI:57783"/>
        <dbReference type="ChEBI" id="CHEBI:58349"/>
        <dbReference type="ChEBI" id="CHEBI:77687"/>
        <dbReference type="EC" id="1.3.1.45"/>
    </reaction>
</comment>
<comment type="pathway">
    <text>Phytoalexin biosynthesis; pterocarpan phytoalexin biosynthesis.</text>
</comment>
<comment type="similarity">
    <text evidence="2">Belongs to the NmrA-type oxidoreductase family. Isoflavone reductase subfamily.</text>
</comment>
<keyword id="KW-0903">Direct protein sequencing</keyword>
<keyword id="KW-0521">NADP</keyword>
<keyword id="KW-0560">Oxidoreductase</keyword>
<keyword id="KW-1185">Reference proteome</keyword>
<accession>Q00016</accession>
<reference key="1">
    <citation type="journal article" date="1991" name="Eur. J. Biochem.">
        <title>Pterocarpan phytoalexin biosynthesis in elicitor-challenged chickpea (Cicer arietinum L.) cell cultures. Purification, characterization and cDNA cloning of NADPH:isoflavone oxidoreductase.</title>
        <authorList>
            <person name="Tiemann K."/>
            <person name="Inze D."/>
            <person name="van Montagu M."/>
            <person name="Barz W."/>
        </authorList>
    </citation>
    <scope>NUCLEOTIDE SEQUENCE [MRNA]</scope>
    <scope>PARTIAL PROTEIN SEQUENCE</scope>
    <source>
        <strain>cv. ILC 3279</strain>
    </source>
</reference>
<reference key="2">
    <citation type="journal article" date="1987" name="FEBS Lett.">
        <title>Isolation of NADPH:isoflavone oxidoreductase, a new enzyme of Pterocarpan phytoalexin biosynthesis in cell suspension cultures of Cicer arietinum.</title>
        <authorList>
            <person name="Tiemann K."/>
            <person name="Hinderer W."/>
            <person name="Barz W."/>
        </authorList>
    </citation>
    <scope>CHARACTERIZATION</scope>
    <source>
        <strain>cv. ILC 3279</strain>
    </source>
</reference>
<feature type="chain" id="PRO_0000204545" description="Isoflavone reductase">
    <location>
        <begin position="1"/>
        <end position="318"/>
    </location>
</feature>
<feature type="active site" description="Proton acceptor" evidence="1">
    <location>
        <position position="144"/>
    </location>
</feature>
<feature type="binding site" evidence="1">
    <location>
        <begin position="11"/>
        <end position="17"/>
    </location>
    <ligand>
        <name>NADP(+)</name>
        <dbReference type="ChEBI" id="CHEBI:58349"/>
    </ligand>
</feature>
<feature type="binding site" evidence="1">
    <location>
        <position position="36"/>
    </location>
    <ligand>
        <name>NADP(+)</name>
        <dbReference type="ChEBI" id="CHEBI:58349"/>
    </ligand>
</feature>
<feature type="binding site" evidence="1">
    <location>
        <position position="44"/>
    </location>
    <ligand>
        <name>NADP(+)</name>
        <dbReference type="ChEBI" id="CHEBI:58349"/>
    </ligand>
</feature>
<feature type="binding site" evidence="1">
    <location>
        <position position="148"/>
    </location>
    <ligand>
        <name>NADP(+)</name>
        <dbReference type="ChEBI" id="CHEBI:58349"/>
    </ligand>
</feature>
<gene>
    <name type="primary">IFR</name>
</gene>